<accession>Q98FS9</accession>
<reference key="1">
    <citation type="journal article" date="2000" name="DNA Res.">
        <title>Complete genome structure of the nitrogen-fixing symbiotic bacterium Mesorhizobium loti.</title>
        <authorList>
            <person name="Kaneko T."/>
            <person name="Nakamura Y."/>
            <person name="Sato S."/>
            <person name="Asamizu E."/>
            <person name="Kato T."/>
            <person name="Sasamoto S."/>
            <person name="Watanabe A."/>
            <person name="Idesawa K."/>
            <person name="Ishikawa A."/>
            <person name="Kawashima K."/>
            <person name="Kimura T."/>
            <person name="Kishida Y."/>
            <person name="Kiyokawa C."/>
            <person name="Kohara M."/>
            <person name="Matsumoto M."/>
            <person name="Matsuno A."/>
            <person name="Mochizuki Y."/>
            <person name="Nakayama S."/>
            <person name="Nakazaki N."/>
            <person name="Shimpo S."/>
            <person name="Sugimoto M."/>
            <person name="Takeuchi C."/>
            <person name="Yamada M."/>
            <person name="Tabata S."/>
        </authorList>
    </citation>
    <scope>NUCLEOTIDE SEQUENCE [LARGE SCALE GENOMIC DNA]</scope>
    <source>
        <strain>LMG 29417 / CECT 9101 / MAFF 303099</strain>
    </source>
</reference>
<dbReference type="EC" id="4.1.1.4" evidence="1"/>
<dbReference type="EMBL" id="BA000012">
    <property type="protein sequence ID" value="BAB50488.1"/>
    <property type="molecule type" value="Genomic_DNA"/>
</dbReference>
<dbReference type="SMR" id="Q98FS9"/>
<dbReference type="DNASU" id="1227363"/>
<dbReference type="KEGG" id="mlo:mlr3634"/>
<dbReference type="eggNOG" id="COG4689">
    <property type="taxonomic scope" value="Bacteria"/>
</dbReference>
<dbReference type="HOGENOM" id="CLU_077089_0_0_5"/>
<dbReference type="Proteomes" id="UP000000552">
    <property type="component" value="Chromosome"/>
</dbReference>
<dbReference type="GO" id="GO:0047602">
    <property type="term" value="F:acetoacetate decarboxylase activity"/>
    <property type="evidence" value="ECO:0007669"/>
    <property type="project" value="UniProtKB-UniRule"/>
</dbReference>
<dbReference type="Gene3D" id="2.40.400.10">
    <property type="entry name" value="Acetoacetate decarboxylase-like"/>
    <property type="match status" value="1"/>
</dbReference>
<dbReference type="HAMAP" id="MF_00597">
    <property type="entry name" value="ADC"/>
    <property type="match status" value="1"/>
</dbReference>
<dbReference type="InterPro" id="IPR010451">
    <property type="entry name" value="Acetoacetate_decarboxylase"/>
</dbReference>
<dbReference type="InterPro" id="IPR023653">
    <property type="entry name" value="Acetoacetate_decarboxylase_bac"/>
</dbReference>
<dbReference type="InterPro" id="IPR023375">
    <property type="entry name" value="ADC_dom_sf"/>
</dbReference>
<dbReference type="NCBIfam" id="NF002614">
    <property type="entry name" value="PRK02265.1"/>
    <property type="match status" value="1"/>
</dbReference>
<dbReference type="Pfam" id="PF06314">
    <property type="entry name" value="ADC"/>
    <property type="match status" value="1"/>
</dbReference>
<dbReference type="SUPFAM" id="SSF160104">
    <property type="entry name" value="Acetoacetate decarboxylase-like"/>
    <property type="match status" value="1"/>
</dbReference>
<keyword id="KW-0210">Decarboxylase</keyword>
<keyword id="KW-0456">Lyase</keyword>
<keyword id="KW-0704">Schiff base</keyword>
<name>ADC3_RHILO</name>
<evidence type="ECO:0000255" key="1">
    <source>
        <dbReference type="HAMAP-Rule" id="MF_00597"/>
    </source>
</evidence>
<sequence length="256" mass="28472">MKRAYAMPLTNPSFPPGPYRFFDREYIIITYRTTREALEAVVPAPLEIDEPLVKYEFIRMPDSTGFGDYTETGQVIPVKYKGQHGGYVHSMYLDDDAPIAGGRELWGFPKKLANPKIVHEGEVIVGTLHYGSVLCATGTMGYKHREADHDSVLASLAAPNFLIKIIPHVDGGPRICELVRYYLTDITLKEAWTAPAALDLRPHVMADVAKLPVLDIISAVHFKADLTLGLGEVVHDYLSDHNRLATSTTQPEKIRA</sequence>
<gene>
    <name evidence="1" type="primary">adc3</name>
    <name type="ordered locus">mlr3634</name>
</gene>
<protein>
    <recommendedName>
        <fullName evidence="1">Acetoacetate decarboxylase 3</fullName>
        <shortName evidence="1">AAD 3</shortName>
        <shortName evidence="1">ADC 3</shortName>
        <ecNumber evidence="1">4.1.1.4</ecNumber>
    </recommendedName>
</protein>
<feature type="chain" id="PRO_0000207108" description="Acetoacetate decarboxylase 3">
    <location>
        <begin position="1"/>
        <end position="256"/>
    </location>
</feature>
<feature type="active site" description="Schiff-base intermediate with acetoacetate" evidence="1">
    <location>
        <position position="110"/>
    </location>
</feature>
<proteinExistence type="inferred from homology"/>
<comment type="function">
    <text evidence="1">Catalyzes the conversion of acetoacetate to acetone and carbon dioxide.</text>
</comment>
<comment type="catalytic activity">
    <reaction evidence="1">
        <text>acetoacetate + H(+) = acetone + CO2</text>
        <dbReference type="Rhea" id="RHEA:19729"/>
        <dbReference type="ChEBI" id="CHEBI:13705"/>
        <dbReference type="ChEBI" id="CHEBI:15347"/>
        <dbReference type="ChEBI" id="CHEBI:15378"/>
        <dbReference type="ChEBI" id="CHEBI:16526"/>
        <dbReference type="EC" id="4.1.1.4"/>
    </reaction>
</comment>
<comment type="similarity">
    <text evidence="1">Belongs to the ADC family.</text>
</comment>
<organism>
    <name type="scientific">Mesorhizobium japonicum (strain LMG 29417 / CECT 9101 / MAFF 303099)</name>
    <name type="common">Mesorhizobium loti (strain MAFF 303099)</name>
    <dbReference type="NCBI Taxonomy" id="266835"/>
    <lineage>
        <taxon>Bacteria</taxon>
        <taxon>Pseudomonadati</taxon>
        <taxon>Pseudomonadota</taxon>
        <taxon>Alphaproteobacteria</taxon>
        <taxon>Hyphomicrobiales</taxon>
        <taxon>Phyllobacteriaceae</taxon>
        <taxon>Mesorhizobium</taxon>
    </lineage>
</organism>